<evidence type="ECO:0000255" key="1">
    <source>
        <dbReference type="HAMAP-Rule" id="MF_00107"/>
    </source>
</evidence>
<accession>B5FTS4</accession>
<name>ISPF_SALDC</name>
<gene>
    <name evidence="1" type="primary">ispF</name>
    <name type="ordered locus">SeD_A3239</name>
</gene>
<proteinExistence type="inferred from homology"/>
<protein>
    <recommendedName>
        <fullName evidence="1">2-C-methyl-D-erythritol 2,4-cyclodiphosphate synthase</fullName>
        <shortName evidence="1">MECDP-synthase</shortName>
        <shortName evidence="1">MECPP-synthase</shortName>
        <shortName evidence="1">MECPS</shortName>
        <ecNumber evidence="1">4.6.1.12</ecNumber>
    </recommendedName>
</protein>
<sequence length="159" mass="16876">MRIGHGFDVHAFGGEGPIIIGGVRISYEKGLLAHSDGDVALHALTDALLGAAALGDIGKLFPDTDPAFKGADSRELLREAWRRIQAKGYTLGNVDVTIIAQAPKMLPHIPQMRVFIAEDLGCHMDDVNVKATTTEKLGFTGRGEGIACEAVALLMKAAK</sequence>
<dbReference type="EC" id="4.6.1.12" evidence="1"/>
<dbReference type="EMBL" id="CP001144">
    <property type="protein sequence ID" value="ACH75990.1"/>
    <property type="molecule type" value="Genomic_DNA"/>
</dbReference>
<dbReference type="RefSeq" id="WP_001219253.1">
    <property type="nucleotide sequence ID" value="NC_011205.1"/>
</dbReference>
<dbReference type="SMR" id="B5FTS4"/>
<dbReference type="KEGG" id="sed:SeD_A3239"/>
<dbReference type="HOGENOM" id="CLU_084630_2_0_6"/>
<dbReference type="UniPathway" id="UPA00056">
    <property type="reaction ID" value="UER00095"/>
</dbReference>
<dbReference type="Proteomes" id="UP000008322">
    <property type="component" value="Chromosome"/>
</dbReference>
<dbReference type="GO" id="GO:0008685">
    <property type="term" value="F:2-C-methyl-D-erythritol 2,4-cyclodiphosphate synthase activity"/>
    <property type="evidence" value="ECO:0007669"/>
    <property type="project" value="UniProtKB-UniRule"/>
</dbReference>
<dbReference type="GO" id="GO:0046872">
    <property type="term" value="F:metal ion binding"/>
    <property type="evidence" value="ECO:0007669"/>
    <property type="project" value="UniProtKB-KW"/>
</dbReference>
<dbReference type="GO" id="GO:0019288">
    <property type="term" value="P:isopentenyl diphosphate biosynthetic process, methylerythritol 4-phosphate pathway"/>
    <property type="evidence" value="ECO:0007669"/>
    <property type="project" value="UniProtKB-UniRule"/>
</dbReference>
<dbReference type="GO" id="GO:0016114">
    <property type="term" value="P:terpenoid biosynthetic process"/>
    <property type="evidence" value="ECO:0007669"/>
    <property type="project" value="InterPro"/>
</dbReference>
<dbReference type="CDD" id="cd00554">
    <property type="entry name" value="MECDP_synthase"/>
    <property type="match status" value="1"/>
</dbReference>
<dbReference type="FunFam" id="3.30.1330.50:FF:000001">
    <property type="entry name" value="2-C-methyl-D-erythritol 2,4-cyclodiphosphate synthase"/>
    <property type="match status" value="1"/>
</dbReference>
<dbReference type="Gene3D" id="3.30.1330.50">
    <property type="entry name" value="2-C-methyl-D-erythritol 2,4-cyclodiphosphate synthase"/>
    <property type="match status" value="1"/>
</dbReference>
<dbReference type="HAMAP" id="MF_00107">
    <property type="entry name" value="IspF"/>
    <property type="match status" value="1"/>
</dbReference>
<dbReference type="InterPro" id="IPR003526">
    <property type="entry name" value="MECDP_synthase"/>
</dbReference>
<dbReference type="InterPro" id="IPR020555">
    <property type="entry name" value="MECDP_synthase_CS"/>
</dbReference>
<dbReference type="InterPro" id="IPR036571">
    <property type="entry name" value="MECDP_synthase_sf"/>
</dbReference>
<dbReference type="NCBIfam" id="TIGR00151">
    <property type="entry name" value="ispF"/>
    <property type="match status" value="1"/>
</dbReference>
<dbReference type="PANTHER" id="PTHR43181">
    <property type="entry name" value="2-C-METHYL-D-ERYTHRITOL 2,4-CYCLODIPHOSPHATE SYNTHASE, CHLOROPLASTIC"/>
    <property type="match status" value="1"/>
</dbReference>
<dbReference type="PANTHER" id="PTHR43181:SF1">
    <property type="entry name" value="2-C-METHYL-D-ERYTHRITOL 2,4-CYCLODIPHOSPHATE SYNTHASE, CHLOROPLASTIC"/>
    <property type="match status" value="1"/>
</dbReference>
<dbReference type="Pfam" id="PF02542">
    <property type="entry name" value="YgbB"/>
    <property type="match status" value="1"/>
</dbReference>
<dbReference type="SUPFAM" id="SSF69765">
    <property type="entry name" value="IpsF-like"/>
    <property type="match status" value="1"/>
</dbReference>
<dbReference type="PROSITE" id="PS01350">
    <property type="entry name" value="ISPF"/>
    <property type="match status" value="1"/>
</dbReference>
<feature type="chain" id="PRO_1000094284" description="2-C-methyl-D-erythritol 2,4-cyclodiphosphate synthase">
    <location>
        <begin position="1"/>
        <end position="159"/>
    </location>
</feature>
<feature type="binding site" evidence="1">
    <location>
        <begin position="8"/>
        <end position="10"/>
    </location>
    <ligand>
        <name>4-CDP-2-C-methyl-D-erythritol 2-phosphate</name>
        <dbReference type="ChEBI" id="CHEBI:57919"/>
    </ligand>
</feature>
<feature type="binding site" evidence="1">
    <location>
        <position position="8"/>
    </location>
    <ligand>
        <name>a divalent metal cation</name>
        <dbReference type="ChEBI" id="CHEBI:60240"/>
    </ligand>
</feature>
<feature type="binding site" evidence="1">
    <location>
        <position position="10"/>
    </location>
    <ligand>
        <name>a divalent metal cation</name>
        <dbReference type="ChEBI" id="CHEBI:60240"/>
    </ligand>
</feature>
<feature type="binding site" evidence="1">
    <location>
        <begin position="34"/>
        <end position="35"/>
    </location>
    <ligand>
        <name>4-CDP-2-C-methyl-D-erythritol 2-phosphate</name>
        <dbReference type="ChEBI" id="CHEBI:57919"/>
    </ligand>
</feature>
<feature type="binding site" evidence="1">
    <location>
        <position position="42"/>
    </location>
    <ligand>
        <name>a divalent metal cation</name>
        <dbReference type="ChEBI" id="CHEBI:60240"/>
    </ligand>
</feature>
<feature type="binding site" evidence="1">
    <location>
        <begin position="56"/>
        <end position="58"/>
    </location>
    <ligand>
        <name>4-CDP-2-C-methyl-D-erythritol 2-phosphate</name>
        <dbReference type="ChEBI" id="CHEBI:57919"/>
    </ligand>
</feature>
<feature type="binding site" evidence="1">
    <location>
        <begin position="61"/>
        <end position="65"/>
    </location>
    <ligand>
        <name>4-CDP-2-C-methyl-D-erythritol 2-phosphate</name>
        <dbReference type="ChEBI" id="CHEBI:57919"/>
    </ligand>
</feature>
<feature type="binding site" evidence="1">
    <location>
        <begin position="100"/>
        <end position="106"/>
    </location>
    <ligand>
        <name>4-CDP-2-C-methyl-D-erythritol 2-phosphate</name>
        <dbReference type="ChEBI" id="CHEBI:57919"/>
    </ligand>
</feature>
<feature type="binding site" evidence="1">
    <location>
        <begin position="132"/>
        <end position="135"/>
    </location>
    <ligand>
        <name>4-CDP-2-C-methyl-D-erythritol 2-phosphate</name>
        <dbReference type="ChEBI" id="CHEBI:57919"/>
    </ligand>
</feature>
<feature type="binding site" evidence="1">
    <location>
        <position position="139"/>
    </location>
    <ligand>
        <name>4-CDP-2-C-methyl-D-erythritol 2-phosphate</name>
        <dbReference type="ChEBI" id="CHEBI:57919"/>
    </ligand>
</feature>
<feature type="binding site" evidence="1">
    <location>
        <position position="142"/>
    </location>
    <ligand>
        <name>4-CDP-2-C-methyl-D-erythritol 2-phosphate</name>
        <dbReference type="ChEBI" id="CHEBI:57919"/>
    </ligand>
</feature>
<feature type="site" description="Transition state stabilizer" evidence="1">
    <location>
        <position position="34"/>
    </location>
</feature>
<feature type="site" description="Transition state stabilizer" evidence="1">
    <location>
        <position position="133"/>
    </location>
</feature>
<reference key="1">
    <citation type="journal article" date="2011" name="J. Bacteriol.">
        <title>Comparative genomics of 28 Salmonella enterica isolates: evidence for CRISPR-mediated adaptive sublineage evolution.</title>
        <authorList>
            <person name="Fricke W.F."/>
            <person name="Mammel M.K."/>
            <person name="McDermott P.F."/>
            <person name="Tartera C."/>
            <person name="White D.G."/>
            <person name="Leclerc J.E."/>
            <person name="Ravel J."/>
            <person name="Cebula T.A."/>
        </authorList>
    </citation>
    <scope>NUCLEOTIDE SEQUENCE [LARGE SCALE GENOMIC DNA]</scope>
    <source>
        <strain>CT_02021853</strain>
    </source>
</reference>
<keyword id="KW-0414">Isoprene biosynthesis</keyword>
<keyword id="KW-0456">Lyase</keyword>
<keyword id="KW-0479">Metal-binding</keyword>
<organism>
    <name type="scientific">Salmonella dublin (strain CT_02021853)</name>
    <dbReference type="NCBI Taxonomy" id="439851"/>
    <lineage>
        <taxon>Bacteria</taxon>
        <taxon>Pseudomonadati</taxon>
        <taxon>Pseudomonadota</taxon>
        <taxon>Gammaproteobacteria</taxon>
        <taxon>Enterobacterales</taxon>
        <taxon>Enterobacteriaceae</taxon>
        <taxon>Salmonella</taxon>
    </lineage>
</organism>
<comment type="function">
    <text evidence="1">Involved in the biosynthesis of isopentenyl diphosphate (IPP) and dimethylallyl diphosphate (DMAPP), two major building blocks of isoprenoid compounds. Catalyzes the conversion of 4-diphosphocytidyl-2-C-methyl-D-erythritol 2-phosphate (CDP-ME2P) to 2-C-methyl-D-erythritol 2,4-cyclodiphosphate (ME-CPP) with a corresponding release of cytidine 5-monophosphate (CMP).</text>
</comment>
<comment type="catalytic activity">
    <reaction evidence="1">
        <text>4-CDP-2-C-methyl-D-erythritol 2-phosphate = 2-C-methyl-D-erythritol 2,4-cyclic diphosphate + CMP</text>
        <dbReference type="Rhea" id="RHEA:23864"/>
        <dbReference type="ChEBI" id="CHEBI:57919"/>
        <dbReference type="ChEBI" id="CHEBI:58483"/>
        <dbReference type="ChEBI" id="CHEBI:60377"/>
        <dbReference type="EC" id="4.6.1.12"/>
    </reaction>
</comment>
<comment type="cofactor">
    <cofactor evidence="1">
        <name>a divalent metal cation</name>
        <dbReference type="ChEBI" id="CHEBI:60240"/>
    </cofactor>
    <text evidence="1">Binds 1 divalent metal cation per subunit.</text>
</comment>
<comment type="pathway">
    <text evidence="1">Isoprenoid biosynthesis; isopentenyl diphosphate biosynthesis via DXP pathway; isopentenyl diphosphate from 1-deoxy-D-xylulose 5-phosphate: step 4/6.</text>
</comment>
<comment type="subunit">
    <text evidence="1">Homotrimer.</text>
</comment>
<comment type="similarity">
    <text evidence="1">Belongs to the IspF family.</text>
</comment>